<organism>
    <name type="scientific">Urechis unicinctus</name>
    <name type="common">Fat innkeeper worm</name>
    <name type="synonym">Chinese penis fish</name>
    <dbReference type="NCBI Taxonomy" id="6432"/>
    <lineage>
        <taxon>Eukaryota</taxon>
        <taxon>Metazoa</taxon>
        <taxon>Spiralia</taxon>
        <taxon>Lophotrochozoa</taxon>
        <taxon>Annelida</taxon>
        <taxon>Polychaeta</taxon>
        <taxon>Echiura</taxon>
        <taxon>Xenopneusta</taxon>
        <taxon>Urechidae</taxon>
        <taxon>Urechis</taxon>
    </lineage>
</organism>
<accession>P40752</accession>
<sequence>AAGMGFFGAR</sequence>
<protein>
    <recommendedName>
        <fullName>Urechistachykinin-2</fullName>
    </recommendedName>
    <alternativeName>
        <fullName>Urechistachykinin II</fullName>
    </alternativeName>
</protein>
<reference key="1">
    <citation type="journal article" date="1993" name="Biochem. Biophys. Res. Commun.">
        <title>Two novel tachykinin-related neuropeptides in the echiuroid worm, Urechis unicinctus.</title>
        <authorList>
            <person name="Ikeda T."/>
            <person name="Minakata H."/>
            <person name="Nomoto K."/>
            <person name="Kubota I."/>
            <person name="Muneoka Y."/>
        </authorList>
    </citation>
    <scope>PROTEIN SEQUENCE</scope>
    <scope>AMIDATION AT ARG-10</scope>
    <scope>SYNTHESIS</scope>
    <source>
        <tissue>Ventral nerve cord</tissue>
    </source>
</reference>
<name>TKU2_UREUN</name>
<feature type="peptide" id="PRO_0000044448" description="Urechistachykinin-2">
    <location>
        <begin position="1"/>
        <end position="10"/>
    </location>
</feature>
<feature type="modified residue" description="Arginine amide" evidence="1">
    <location>
        <position position="10"/>
    </location>
</feature>
<keyword id="KW-0027">Amidation</keyword>
<keyword id="KW-0903">Direct protein sequencing</keyword>
<keyword id="KW-0527">Neuropeptide</keyword>
<keyword id="KW-0964">Secreted</keyword>
<dbReference type="GO" id="GO:0005576">
    <property type="term" value="C:extracellular region"/>
    <property type="evidence" value="ECO:0007669"/>
    <property type="project" value="UniProtKB-SubCell"/>
</dbReference>
<dbReference type="GO" id="GO:0007218">
    <property type="term" value="P:neuropeptide signaling pathway"/>
    <property type="evidence" value="ECO:0007669"/>
    <property type="project" value="UniProtKB-KW"/>
</dbReference>
<comment type="function">
    <text>Contractile action on the inner circular body-wall muscle of the animal.</text>
</comment>
<comment type="subcellular location">
    <subcellularLocation>
        <location>Secreted</location>
    </subcellularLocation>
</comment>
<evidence type="ECO:0000269" key="1">
    <source>
    </source>
</evidence>
<proteinExistence type="evidence at protein level"/>